<feature type="chain" id="PRO_0000238632" description="Protein YIG1">
    <location>
        <begin position="1"/>
        <end position="461"/>
    </location>
</feature>
<feature type="region of interest" description="Disordered" evidence="1">
    <location>
        <begin position="58"/>
        <end position="80"/>
    </location>
</feature>
<feature type="compositionally biased region" description="Acidic residues" evidence="1">
    <location>
        <begin position="71"/>
        <end position="80"/>
    </location>
</feature>
<comment type="function">
    <text evidence="2">Involved in the regulation of anaerobiotic glycerol metabolism.</text>
</comment>
<comment type="subcellular location">
    <subcellularLocation>
        <location evidence="2">Cytoplasm</location>
    </subcellularLocation>
    <subcellularLocation>
        <location evidence="2">Nucleus</location>
    </subcellularLocation>
</comment>
<evidence type="ECO:0000256" key="1">
    <source>
        <dbReference type="SAM" id="MobiDB-lite"/>
    </source>
</evidence>
<evidence type="ECO:0000269" key="2">
    <source>
    </source>
</evidence>
<keyword id="KW-0963">Cytoplasm</keyword>
<keyword id="KW-0539">Nucleus</keyword>
<keyword id="KW-1185">Reference proteome</keyword>
<reference key="1">
    <citation type="journal article" date="1997" name="Nature">
        <title>The nucleotide sequence of Saccharomyces cerevisiae chromosome XVI.</title>
        <authorList>
            <person name="Bussey H."/>
            <person name="Storms R.K."/>
            <person name="Ahmed A."/>
            <person name="Albermann K."/>
            <person name="Allen E."/>
            <person name="Ansorge W."/>
            <person name="Araujo R."/>
            <person name="Aparicio A."/>
            <person name="Barrell B.G."/>
            <person name="Badcock K."/>
            <person name="Benes V."/>
            <person name="Botstein D."/>
            <person name="Bowman S."/>
            <person name="Brueckner M."/>
            <person name="Carpenter J."/>
            <person name="Cherry J.M."/>
            <person name="Chung E."/>
            <person name="Churcher C.M."/>
            <person name="Coster F."/>
            <person name="Davis K."/>
            <person name="Davis R.W."/>
            <person name="Dietrich F.S."/>
            <person name="Delius H."/>
            <person name="DiPaolo T."/>
            <person name="Dubois E."/>
            <person name="Duesterhoeft A."/>
            <person name="Duncan M."/>
            <person name="Floeth M."/>
            <person name="Fortin N."/>
            <person name="Friesen J.D."/>
            <person name="Fritz C."/>
            <person name="Goffeau A."/>
            <person name="Hall J."/>
            <person name="Hebling U."/>
            <person name="Heumann K."/>
            <person name="Hilbert H."/>
            <person name="Hillier L.W."/>
            <person name="Hunicke-Smith S."/>
            <person name="Hyman R.W."/>
            <person name="Johnston M."/>
            <person name="Kalman S."/>
            <person name="Kleine K."/>
            <person name="Komp C."/>
            <person name="Kurdi O."/>
            <person name="Lashkari D."/>
            <person name="Lew H."/>
            <person name="Lin A."/>
            <person name="Lin D."/>
            <person name="Louis E.J."/>
            <person name="Marathe R."/>
            <person name="Messenguy F."/>
            <person name="Mewes H.-W."/>
            <person name="Mirtipati S."/>
            <person name="Moestl D."/>
            <person name="Mueller-Auer S."/>
            <person name="Namath A."/>
            <person name="Nentwich U."/>
            <person name="Oefner P."/>
            <person name="Pearson D."/>
            <person name="Petel F.X."/>
            <person name="Pohl T.M."/>
            <person name="Purnelle B."/>
            <person name="Rajandream M.A."/>
            <person name="Rechmann S."/>
            <person name="Rieger M."/>
            <person name="Riles L."/>
            <person name="Roberts D."/>
            <person name="Schaefer M."/>
            <person name="Scharfe M."/>
            <person name="Scherens B."/>
            <person name="Schramm S."/>
            <person name="Schroeder M."/>
            <person name="Sdicu A.-M."/>
            <person name="Tettelin H."/>
            <person name="Urrestarazu L.A."/>
            <person name="Ushinsky S."/>
            <person name="Vierendeels F."/>
            <person name="Vissers S."/>
            <person name="Voss H."/>
            <person name="Walsh S.V."/>
            <person name="Wambutt R."/>
            <person name="Wang Y."/>
            <person name="Wedler E."/>
            <person name="Wedler H."/>
            <person name="Winnett E."/>
            <person name="Zhong W.-W."/>
            <person name="Zollner A."/>
            <person name="Vo D.H."/>
            <person name="Hani J."/>
        </authorList>
    </citation>
    <scope>NUCLEOTIDE SEQUENCE [LARGE SCALE GENOMIC DNA]</scope>
    <source>
        <strain>ATCC 204508 / S288c</strain>
    </source>
</reference>
<reference key="2">
    <citation type="journal article" date="2014" name="G3 (Bethesda)">
        <title>The reference genome sequence of Saccharomyces cerevisiae: Then and now.</title>
        <authorList>
            <person name="Engel S.R."/>
            <person name="Dietrich F.S."/>
            <person name="Fisk D.G."/>
            <person name="Binkley G."/>
            <person name="Balakrishnan R."/>
            <person name="Costanzo M.C."/>
            <person name="Dwight S.S."/>
            <person name="Hitz B.C."/>
            <person name="Karra K."/>
            <person name="Nash R.S."/>
            <person name="Weng S."/>
            <person name="Wong E.D."/>
            <person name="Lloyd P."/>
            <person name="Skrzypek M.S."/>
            <person name="Miyasato S.R."/>
            <person name="Simison M."/>
            <person name="Cherry J.M."/>
        </authorList>
    </citation>
    <scope>GENOME REANNOTATION</scope>
    <source>
        <strain>ATCC 204508 / S288c</strain>
    </source>
</reference>
<reference key="3">
    <citation type="journal article" date="2005" name="Yeast">
        <title>The YIG1 (YPL201c) encoded protein is involved in regulating anaerobic glycerol metabolism in Saccharomyces cerevisiae.</title>
        <authorList>
            <person name="Granath K."/>
            <person name="Modig T."/>
            <person name="Forsmark A."/>
            <person name="Adler L."/>
            <person name="Liden G."/>
        </authorList>
    </citation>
    <scope>FUNCTION</scope>
    <scope>SUBCELLULAR LOCATION</scope>
</reference>
<organism>
    <name type="scientific">Saccharomyces cerevisiae (strain ATCC 204508 / S288c)</name>
    <name type="common">Baker's yeast</name>
    <dbReference type="NCBI Taxonomy" id="559292"/>
    <lineage>
        <taxon>Eukaryota</taxon>
        <taxon>Fungi</taxon>
        <taxon>Dikarya</taxon>
        <taxon>Ascomycota</taxon>
        <taxon>Saccharomycotina</taxon>
        <taxon>Saccharomycetes</taxon>
        <taxon>Saccharomycetales</taxon>
        <taxon>Saccharomycetaceae</taxon>
        <taxon>Saccharomyces</taxon>
    </lineage>
</organism>
<protein>
    <recommendedName>
        <fullName>Protein YIG1</fullName>
    </recommendedName>
</protein>
<sequence length="461" mass="52873">MGIPMQIYQDGKGVQFYHTRYQNVFDERASKYGNYTVNNDYPQLPDTIKEHIDQLTFSNVGEDGGDVGNYSEEDDDGDEEKELEDVFRSNRGLEFVRINNYFTTHDLQSFKSFRNFNSKYWIFYSNQAEDKKLLLYDFNGQHLIFIKQQFYGQLNLLLSDAIICMDCNFGYNSNTIQILVGFQNGKLLKLNCDLNGNVNNHLLLKDPSTSSHQSHLSILNVWAGLLPHFVVSFSLKDGLLITSLDHQQSNGSFQSFHTNIDLPVDLRTTTNVKSVLNFPQFTLYKGNDMIFHCKNLLGSDASTLNKEINFMLKIDEDVQKIDYLLKTNHILLETNMRYLSIPTRDPIENSNSSPPVSDSEVYPIFYKTQELHVHASGTGRQIANNGKYIFITEQHLYGTALSVYKYSISFKRWLFVGYSDIRAKYGIRSVKDLFVGNCPSVNSPVLTILTDDNNIQTILLK</sequence>
<accession>Q08956</accession>
<accession>D6W3G8</accession>
<gene>
    <name type="primary">YIG1</name>
    <name type="ordered locus">YPL201C</name>
</gene>
<name>YIG1_YEAST</name>
<dbReference type="EMBL" id="Z73557">
    <property type="protein sequence ID" value="CAA97915.1"/>
    <property type="molecule type" value="Genomic_DNA"/>
</dbReference>
<dbReference type="EMBL" id="BK006949">
    <property type="protein sequence ID" value="DAA11234.1"/>
    <property type="molecule type" value="Genomic_DNA"/>
</dbReference>
<dbReference type="PIR" id="S65220">
    <property type="entry name" value="S65220"/>
</dbReference>
<dbReference type="RefSeq" id="NP_015123.1">
    <property type="nucleotide sequence ID" value="NM_001184015.1"/>
</dbReference>
<dbReference type="BioGRID" id="35983">
    <property type="interactions" value="81"/>
</dbReference>
<dbReference type="DIP" id="DIP-1367N"/>
<dbReference type="FunCoup" id="Q08956">
    <property type="interactions" value="56"/>
</dbReference>
<dbReference type="IntAct" id="Q08956">
    <property type="interactions" value="5"/>
</dbReference>
<dbReference type="MINT" id="Q08956"/>
<dbReference type="STRING" id="4932.YPL201C"/>
<dbReference type="PaxDb" id="4932-YPL201C"/>
<dbReference type="EnsemblFungi" id="YPL201C_mRNA">
    <property type="protein sequence ID" value="YPL201C"/>
    <property type="gene ID" value="YPL201C"/>
</dbReference>
<dbReference type="GeneID" id="855900"/>
<dbReference type="KEGG" id="sce:YPL201C"/>
<dbReference type="AGR" id="SGD:S000006122"/>
<dbReference type="SGD" id="S000006122">
    <property type="gene designation" value="YIG1"/>
</dbReference>
<dbReference type="VEuPathDB" id="FungiDB:YPL201C"/>
<dbReference type="eggNOG" id="ENOG502S8CN">
    <property type="taxonomic scope" value="Eukaryota"/>
</dbReference>
<dbReference type="HOGENOM" id="CLU_588135_0_0_1"/>
<dbReference type="InParanoid" id="Q08956"/>
<dbReference type="OMA" id="NCHTSIN"/>
<dbReference type="OrthoDB" id="4034100at2759"/>
<dbReference type="BioCyc" id="YEAST:G3O-34093-MONOMER"/>
<dbReference type="BioGRID-ORCS" id="855900">
    <property type="hits" value="2 hits in 10 CRISPR screens"/>
</dbReference>
<dbReference type="PRO" id="PR:Q08956"/>
<dbReference type="Proteomes" id="UP000002311">
    <property type="component" value="Chromosome XVI"/>
</dbReference>
<dbReference type="RNAct" id="Q08956">
    <property type="molecule type" value="protein"/>
</dbReference>
<dbReference type="GO" id="GO:0005829">
    <property type="term" value="C:cytosol"/>
    <property type="evidence" value="ECO:0000314"/>
    <property type="project" value="SGD"/>
</dbReference>
<dbReference type="GO" id="GO:0005634">
    <property type="term" value="C:nucleus"/>
    <property type="evidence" value="ECO:0000314"/>
    <property type="project" value="SGD"/>
</dbReference>
<dbReference type="GO" id="GO:0006114">
    <property type="term" value="P:glycerol biosynthetic process"/>
    <property type="evidence" value="ECO:0000315"/>
    <property type="project" value="SGD"/>
</dbReference>
<proteinExistence type="predicted"/>